<feature type="chain" id="PRO_0000321781" description="Endoribonuclease YbeY">
    <location>
        <begin position="1"/>
        <end position="185"/>
    </location>
</feature>
<feature type="binding site" evidence="1">
    <location>
        <position position="142"/>
    </location>
    <ligand>
        <name>Zn(2+)</name>
        <dbReference type="ChEBI" id="CHEBI:29105"/>
        <note>catalytic</note>
    </ligand>
</feature>
<feature type="binding site" evidence="1">
    <location>
        <position position="146"/>
    </location>
    <ligand>
        <name>Zn(2+)</name>
        <dbReference type="ChEBI" id="CHEBI:29105"/>
        <note>catalytic</note>
    </ligand>
</feature>
<feature type="binding site" evidence="1">
    <location>
        <position position="152"/>
    </location>
    <ligand>
        <name>Zn(2+)</name>
        <dbReference type="ChEBI" id="CHEBI:29105"/>
        <note>catalytic</note>
    </ligand>
</feature>
<accession>A7HZ84</accession>
<reference key="1">
    <citation type="journal article" date="2011" name="Stand. Genomic Sci.">
        <title>Complete genome sequence of Parvibaculum lavamentivorans type strain (DS-1(T)).</title>
        <authorList>
            <person name="Schleheck D."/>
            <person name="Weiss M."/>
            <person name="Pitluck S."/>
            <person name="Bruce D."/>
            <person name="Land M.L."/>
            <person name="Han S."/>
            <person name="Saunders E."/>
            <person name="Tapia R."/>
            <person name="Detter C."/>
            <person name="Brettin T."/>
            <person name="Han J."/>
            <person name="Woyke T."/>
            <person name="Goodwin L."/>
            <person name="Pennacchio L."/>
            <person name="Nolan M."/>
            <person name="Cook A.M."/>
            <person name="Kjelleberg S."/>
            <person name="Thomas T."/>
        </authorList>
    </citation>
    <scope>NUCLEOTIDE SEQUENCE [LARGE SCALE GENOMIC DNA]</scope>
    <source>
        <strain>DS-1 / DSM 13023 / NCIMB 13966</strain>
    </source>
</reference>
<proteinExistence type="inferred from homology"/>
<organism>
    <name type="scientific">Parvibaculum lavamentivorans (strain DS-1 / DSM 13023 / NCIMB 13966)</name>
    <dbReference type="NCBI Taxonomy" id="402881"/>
    <lineage>
        <taxon>Bacteria</taxon>
        <taxon>Pseudomonadati</taxon>
        <taxon>Pseudomonadota</taxon>
        <taxon>Alphaproteobacteria</taxon>
        <taxon>Hyphomicrobiales</taxon>
        <taxon>Parvibaculaceae</taxon>
        <taxon>Parvibaculum</taxon>
    </lineage>
</organism>
<protein>
    <recommendedName>
        <fullName evidence="1">Endoribonuclease YbeY</fullName>
        <ecNumber evidence="1">3.1.-.-</ecNumber>
    </recommendedName>
</protein>
<keyword id="KW-0963">Cytoplasm</keyword>
<keyword id="KW-0255">Endonuclease</keyword>
<keyword id="KW-0378">Hydrolase</keyword>
<keyword id="KW-0479">Metal-binding</keyword>
<keyword id="KW-0540">Nuclease</keyword>
<keyword id="KW-1185">Reference proteome</keyword>
<keyword id="KW-0690">Ribosome biogenesis</keyword>
<keyword id="KW-0698">rRNA processing</keyword>
<keyword id="KW-0862">Zinc</keyword>
<comment type="function">
    <text evidence="1">Single strand-specific metallo-endoribonuclease involved in late-stage 70S ribosome quality control and in maturation of the 3' terminus of the 16S rRNA.</text>
</comment>
<comment type="cofactor">
    <cofactor evidence="1">
        <name>Zn(2+)</name>
        <dbReference type="ChEBI" id="CHEBI:29105"/>
    </cofactor>
    <text evidence="1">Binds 1 zinc ion.</text>
</comment>
<comment type="subcellular location">
    <subcellularLocation>
        <location evidence="1">Cytoplasm</location>
    </subcellularLocation>
</comment>
<comment type="similarity">
    <text evidence="1">Belongs to the endoribonuclease YbeY family.</text>
</comment>
<sequence>MSSDGTPGRKRSAKVRSSVSGLEIEVLREAGDWESSTDETVRRAAEHAYAVARGDESAELCIVLGDDALVAKLNKAYRGKEGPTNVLSFPAAEMPDTGAPEAVFGGATPLLGDVVLARETIAREALDQNKKFADHLSHLTVHGVLHLLGHDHMEDVDADEMEALERDILEDLGIADPYGADHPGQ</sequence>
<dbReference type="EC" id="3.1.-.-" evidence="1"/>
<dbReference type="EMBL" id="CP000774">
    <property type="protein sequence ID" value="ABS65217.1"/>
    <property type="molecule type" value="Genomic_DNA"/>
</dbReference>
<dbReference type="RefSeq" id="WP_012112478.1">
    <property type="nucleotide sequence ID" value="NC_009719.1"/>
</dbReference>
<dbReference type="SMR" id="A7HZ84"/>
<dbReference type="STRING" id="402881.Plav_3619"/>
<dbReference type="KEGG" id="pla:Plav_3619"/>
<dbReference type="eggNOG" id="COG0319">
    <property type="taxonomic scope" value="Bacteria"/>
</dbReference>
<dbReference type="HOGENOM" id="CLU_106710_0_0_5"/>
<dbReference type="OrthoDB" id="9807740at2"/>
<dbReference type="Proteomes" id="UP000006377">
    <property type="component" value="Chromosome"/>
</dbReference>
<dbReference type="GO" id="GO:0005737">
    <property type="term" value="C:cytoplasm"/>
    <property type="evidence" value="ECO:0007669"/>
    <property type="project" value="UniProtKB-SubCell"/>
</dbReference>
<dbReference type="GO" id="GO:0004222">
    <property type="term" value="F:metalloendopeptidase activity"/>
    <property type="evidence" value="ECO:0007669"/>
    <property type="project" value="InterPro"/>
</dbReference>
<dbReference type="GO" id="GO:0004521">
    <property type="term" value="F:RNA endonuclease activity"/>
    <property type="evidence" value="ECO:0007669"/>
    <property type="project" value="UniProtKB-UniRule"/>
</dbReference>
<dbReference type="GO" id="GO:0008270">
    <property type="term" value="F:zinc ion binding"/>
    <property type="evidence" value="ECO:0007669"/>
    <property type="project" value="UniProtKB-UniRule"/>
</dbReference>
<dbReference type="GO" id="GO:0006364">
    <property type="term" value="P:rRNA processing"/>
    <property type="evidence" value="ECO:0007669"/>
    <property type="project" value="UniProtKB-UniRule"/>
</dbReference>
<dbReference type="Gene3D" id="3.40.390.30">
    <property type="entry name" value="Metalloproteases ('zincins'), catalytic domain"/>
    <property type="match status" value="1"/>
</dbReference>
<dbReference type="HAMAP" id="MF_00009">
    <property type="entry name" value="Endoribonucl_YbeY"/>
    <property type="match status" value="1"/>
</dbReference>
<dbReference type="InterPro" id="IPR023091">
    <property type="entry name" value="MetalPrtase_cat_dom_sf_prd"/>
</dbReference>
<dbReference type="InterPro" id="IPR002036">
    <property type="entry name" value="YbeY"/>
</dbReference>
<dbReference type="InterPro" id="IPR020549">
    <property type="entry name" value="YbeY_CS"/>
</dbReference>
<dbReference type="NCBIfam" id="TIGR00043">
    <property type="entry name" value="rRNA maturation RNase YbeY"/>
    <property type="match status" value="1"/>
</dbReference>
<dbReference type="PANTHER" id="PTHR46986">
    <property type="entry name" value="ENDORIBONUCLEASE YBEY, CHLOROPLASTIC"/>
    <property type="match status" value="1"/>
</dbReference>
<dbReference type="PANTHER" id="PTHR46986:SF1">
    <property type="entry name" value="ENDORIBONUCLEASE YBEY, CHLOROPLASTIC"/>
    <property type="match status" value="1"/>
</dbReference>
<dbReference type="Pfam" id="PF02130">
    <property type="entry name" value="YbeY"/>
    <property type="match status" value="1"/>
</dbReference>
<dbReference type="SUPFAM" id="SSF55486">
    <property type="entry name" value="Metalloproteases ('zincins'), catalytic domain"/>
    <property type="match status" value="1"/>
</dbReference>
<dbReference type="PROSITE" id="PS01306">
    <property type="entry name" value="UPF0054"/>
    <property type="match status" value="1"/>
</dbReference>
<gene>
    <name evidence="1" type="primary">ybeY</name>
    <name type="ordered locus">Plav_3619</name>
</gene>
<evidence type="ECO:0000255" key="1">
    <source>
        <dbReference type="HAMAP-Rule" id="MF_00009"/>
    </source>
</evidence>
<name>YBEY_PARL1</name>